<comment type="function">
    <text evidence="1 9 11">Component of a calcium-permeant ion channel formed by PKD1L2 and PKD1L1 in primary cilia, where it controls cilium calcium concentration, without affecting cytoplasmic calcium concentration, and regulates sonic hedgehog/SHH signaling and GLI2 transcription (PubMed:24336289). The PKD1L1:PKD2L1 channel complex is mechanosensitive only at high pressures and is highly temperature sensitive (PubMed:24336289). Also involved in left/right axis specification downstream of nodal flow by forming a complex with PKD2 in cilia to facilitate flow detection in left/right patterning (By similarity). May function as a G-protein-coupled receptor (PubMed:15203210).</text>
</comment>
<comment type="subunit">
    <text evidence="1 9 11">Heterodimer (PubMed:24336289). Interacts with PKD2 to form a calcium channel (By similarity). Interacts with PKD2L1; to form ciliary calcium channel (PubMed:24336289). May interact with GNA12, GNAS, GNAI1 and GNAI2 (PubMed:15203210).</text>
</comment>
<comment type="subcellular location">
    <subcellularLocation>
        <location evidence="11 13">Cell projection</location>
        <location evidence="11 13">Cilium membrane</location>
        <topology evidence="2">Multi-pass membrane protein</topology>
    </subcellularLocation>
</comment>
<comment type="alternative products">
    <event type="alternative splicing"/>
    <isoform>
        <id>Q8TDX9-1</id>
        <name>1</name>
        <sequence type="displayed"/>
    </isoform>
    <isoform>
        <id>Q8TDX9-2</id>
        <name>2</name>
        <sequence type="described" ref="VSP_013215 VSP_013216"/>
    </isoform>
</comment>
<comment type="tissue specificity">
    <text evidence="8">Detected in testis and in fetal and adult heart.</text>
</comment>
<comment type="disease" evidence="12">
    <disease id="DI-04866">
        <name>Heterotaxy, visceral, 8, autosomal</name>
        <acronym>HTX8</acronym>
        <description>A form of visceral heterotaxy, a complex disorder due to disruption of the normal left-right asymmetry of the thoracoabdominal organs. Visceral heterotaxy or situs ambiguus results in randomization of the placement of visceral organs, including the heart, lungs, liver, spleen, and stomach. The organs are oriented randomly with respect to the left-right axis and with respect to one another. It can be associated with a variety of congenital defects including cardiac malformations. HTX8 inheritance is autosomal recessive.</description>
        <dbReference type="MIM" id="617205"/>
    </disease>
    <text>The disease is caused by variants affecting the gene represented in this entry.</text>
</comment>
<comment type="disease">
    <text evidence="13">Defects in PKD1L1 may be involved in autosomal recessive congenital chylothorax, a disorder belonging to the congenital lymphatic anomaly spectrum. Congenital chylothorax is characterized by antenatal chyle accumulation in the pleural cavity resulting in fetal lung compression, restricted venous blood flow to the heart and fetal hydrops. Frequently, affected fetuses die intrauterine or shortly after birth. In surviving infants, loss of chyle-soluble fluid leads to malnutrition, thrombophilia, and immunodeficiency.</text>
</comment>
<comment type="similarity">
    <text evidence="15">Belongs to the polycystin family.</text>
</comment>
<comment type="sequence caution" evidence="15">
    <conflict type="erroneous initiation">
        <sequence resource="EMBL-CDS" id="AAQ89117"/>
    </conflict>
    <text>Truncated N-terminus.</text>
</comment>
<sequence length="2849" mass="315435">MAEEAAQNISDDQERCLQAACCLSFGGELSVSTDKSWGLHLCSCSPPGGGLWVEVYANHVLLMSDGKCGCPWCALNGKAEDRESQSPSSSASRQKNIWKTTSEAALSVVNEKTQAVVNEKTQAPLDCDNSADRIPHKPFIIIARAWSSGGPRFHHRRLCATGTADSTFSALLQLQGTTSAAAPCSLKMEASCCVLRLLCCAEDVATGLLPGTVTMETPTKVARPTQTSSQRVPLWPISHFPTSPRSSHGLPPGIPRTPSFTASQSGSEILYPPTQHPPVAILARNSDNFMNPVLNCSLEVEARAPPNLGFRVHMASGEALCLMMDFGDSSGVEMRLHNMSEAMAVTAYHQYSKGIFFHLLHFQLDMSTYKEAETQNTTLNVYLCQSENSCLEDSDPSNLGYELISAFVTKGVYMLKAVIYNEFHGTEVELGPYYVEIGHEAVSAFMNSSSVHEDEVLVFADSQVNQKSTVVIHHFPSIPSYNVSFISQTQVGDSQAWHSMTVWYKMQSVSVYTNGTVFATDTDITFTAVTKETIPLEFEWYFGEDPPVRTTSRSIKKRLSIPQWYRVMVKASNRMSSVVSEPHVIRVQKKIVANRLTSPSSALVNASVAFECWINFGTDVAYLWDFGDGTVSLGSSSSSHVYSREGEFTVEVLAFNNVSASTLRQQLFIVCEPCQPPLVKNMGPGKVQIWRSQPVRLGVTFEAAVFCDISQGLSYTWNLMDSEGLPVSLPAAVDTHRQTLILPSHTLEYGNYTALAKVQIEGSVVYSNYCVGLEVRAQAPVSVISEGTHLFFSRTTSSPIVLRGTQSFDPDDPGATLRYHWECATAGSPAHPCFDSSTAHQLDAAAPTVSFEAQWLSDSYDQFLVMLRVSSGGRNSSETRVFLSPYPDSAFRFVHISWVSFKDTFVNWNDELSLQAMCEDCSEIPNLSYSWDLFLVNATEKNRIEVPFCRVVGLLGSLGLGAISESSQLNLLPTEPGTADPDATTTPFSREPSPVTLGQPATSAPRGTPTEPMTGVYWIPPAGDSAVLGEAPEEGSLDLEPGPQSKGSLMTGRSERSQPTHSPDPHLSDFEAYYSDIQEAIPSGGRQPAKDTSFPGSGPSLSAEESPGDGDNLVDPSLSAGRAEPVLMIDWPKALLGRAVFQGYSSSGITEQTVTIKPYSLSSGETYVLQVSVASKHGLLGKAQLYLTVNPAPRDMACQVQPHHGLEAHTVFSVFCMSGKPDFHYEFSYQIGNTSKHTLYHGRDTQYYFVLPAGEHLDNYKVMVSTEITDGKGSKVQPCTVVVTVLPRYHGNDCLGEDLYNSSLKNLSTLQLMGSYTEIRNYITVITRILSRLSKEDKTASCNQWSRIQDALISSVCRLAFVDQEEMIGSVLMLRDLVSFSNKLGFMSAVLILKYTRALLAQGQFSGPFVIDKGVRLELIGLISRVWEVSEQENSKEEVYRHEEGITVISDLLLGCLSLNHVSTGQMEFRTLLHYNLQSSVQSLGSVQVHLPGDLAGHSPAGAETQSPCYISQLILFKKNPYPGSQAPGQIGGVVGLNLYTCSSRRPINRQWLRKPVMVEFGEEDGLDNRRNKTTFVLLRDKVNLHQFTELSENPQESLQIEIEFSKPVTRAFPVMLLVRFSEKPTPSDFLVKQIYFWDESIVQIYIPAASQKDASVGYLSLLDADYDRKPPNRYLAKAVNYTVHFQWIRCLFWDKREWKSERFSPQPGTSPEKVNCSYHRLAAFALLRRKLKASFEVSDISKLQSHPENLLPSIFIMGSVILYGFLVAKSRQVDHHEKKKAGYIFLQEASLPGHQLYAVVIDTGFRAPARLTSKVYIVLCGDNGLSETKELSCPEKPLFERNSRHTFILSAPAQLGLLRKIRLWHDSRGPSPGWFISHVMVKELHTGQGWFFPAQCWLSAGRHDGRVERELTCLQGGLGFRKLFYCKFTEYLEDFHVWLSVYSRPSSSRYLHTPRLTVSFSLLCVYACLTALVAAGGQEQPHLDVSPTLGSFRVGLLCTLLASPGAQLLSLLFRLSKEAPGSARVEPHSPLRGGAQTEAPHGPNSWGRIPDAQEPRKQPASAILSGSGRAQRKAASDNGTACPAPKLQVHGADHSRTSLMGKSHCCPPHTQAPSSGLEGLMPQWSRALQPWWSSAVWAICGTASLACSLGTGFLAYRFGQEQCVQWLHLLSLSVVCCIFITQPLMVCLMALGFAWKRRADNHFFTESLCEATRDLDSELAERSWTRLPFSSSCSIPDCAGEVEKVLAARQQARHLRWAHPPSKAQLRGTRQRMRRESRTRAALRDISMDILMLLLLLCVIYGRFSQDEYSLNQAIRKEFTRNARNCLGGLRNIADWWDWSLTTLLDGLYPGGTPSARVPGAQPGALGGKCYLIGSSVIRQLKVFPRHLCKPPRPFSALIEDSIPTCSPEVGGPENPYLIDPENQNVTLNGPGGCGTREDCVLSLGRTRTEAHTALSRLRASMWIDRSTRAVSVHFTLYNPPTQLFTSVSLRVEILPTGSLVPSSLVESFSIFRSDSALQYHLMLPQLVFLALSLIHLCVQLYRMMDKGVLSYWRKPRNWLELSVVGVSLTYYAVSGHLVTLAGDVTNQFHRGLCRAFMDLTLMASWNQRARWLRGILLFLFTLKCVYLPGIQNTMASCSSMMRHSLPSIFVAGLVGALMLAALSHLHRFLLSMWVLPPGTFTDAFPGLLFHFPRRSQKDCLLGLSKSDQRAMACYFGILLIVSATLCFGMLRGFLMTLPQKRKSFQSKSFVRLKDVTAYMWEKVLTFLRLETPKLEEAEMVENHNYYLDEFANLLDELLMKINGLSDSLQLPLLEKTSNNTGEARTEESPLVDISSYQAAEPADIKDF</sequence>
<protein>
    <recommendedName>
        <fullName evidence="15">Polycystin-1-like protein 1</fullName>
        <shortName>Polycystin-1L1</shortName>
    </recommendedName>
    <alternativeName>
        <fullName>PC1-like 1 protein</fullName>
    </alternativeName>
    <alternativeName>
        <fullName>Polycystic kidney disease protein 1-like 1</fullName>
    </alternativeName>
</protein>
<accession>Q8TDX9</accession>
<accession>Q6UWK1</accession>
<keyword id="KW-0025">Alternative splicing</keyword>
<keyword id="KW-0106">Calcium</keyword>
<keyword id="KW-0107">Calcium channel</keyword>
<keyword id="KW-0109">Calcium transport</keyword>
<keyword id="KW-1003">Cell membrane</keyword>
<keyword id="KW-0966">Cell projection</keyword>
<keyword id="KW-0969">Cilium</keyword>
<keyword id="KW-1015">Disulfide bond</keyword>
<keyword id="KW-0325">Glycoprotein</keyword>
<keyword id="KW-1056">Heterotaxy</keyword>
<keyword id="KW-0407">Ion channel</keyword>
<keyword id="KW-0406">Ion transport</keyword>
<keyword id="KW-0472">Membrane</keyword>
<keyword id="KW-1267">Proteomics identification</keyword>
<keyword id="KW-1185">Reference proteome</keyword>
<keyword id="KW-0677">Repeat</keyword>
<keyword id="KW-0812">Transmembrane</keyword>
<keyword id="KW-1133">Transmembrane helix</keyword>
<keyword id="KW-0813">Transport</keyword>
<name>PK1L1_HUMAN</name>
<proteinExistence type="evidence at protein level"/>
<reference key="1">
    <citation type="journal article" date="2002" name="Genomics">
        <title>The sequence, expression, and chromosomal localization of a novel polycystic kidney disease 1-like gene, PKD1L1, in human.</title>
        <authorList>
            <person name="Yuasa T."/>
            <person name="Venugopal B."/>
            <person name="Weremowicz S."/>
            <person name="Morton C.C."/>
            <person name="Guo L."/>
            <person name="Zhou J."/>
        </authorList>
    </citation>
    <scope>NUCLEOTIDE SEQUENCE [MRNA] (ISOFORM 1)</scope>
    <scope>TISSUE SPECIFICITY</scope>
    <source>
        <tissue>Testis</tissue>
    </source>
</reference>
<reference key="2">
    <citation type="journal article" date="2003" name="Genome Res.">
        <title>The secreted protein discovery initiative (SPDI), a large-scale effort to identify novel human secreted and transmembrane proteins: a bioinformatics assessment.</title>
        <authorList>
            <person name="Clark H.F."/>
            <person name="Gurney A.L."/>
            <person name="Abaya E."/>
            <person name="Baker K."/>
            <person name="Baldwin D.T."/>
            <person name="Brush J."/>
            <person name="Chen J."/>
            <person name="Chow B."/>
            <person name="Chui C."/>
            <person name="Crowley C."/>
            <person name="Currell B."/>
            <person name="Deuel B."/>
            <person name="Dowd P."/>
            <person name="Eaton D."/>
            <person name="Foster J.S."/>
            <person name="Grimaldi C."/>
            <person name="Gu Q."/>
            <person name="Hass P.E."/>
            <person name="Heldens S."/>
            <person name="Huang A."/>
            <person name="Kim H.S."/>
            <person name="Klimowski L."/>
            <person name="Jin Y."/>
            <person name="Johnson S."/>
            <person name="Lee J."/>
            <person name="Lewis L."/>
            <person name="Liao D."/>
            <person name="Mark M.R."/>
            <person name="Robbie E."/>
            <person name="Sanchez C."/>
            <person name="Schoenfeld J."/>
            <person name="Seshagiri S."/>
            <person name="Simmons L."/>
            <person name="Singh J."/>
            <person name="Smith V."/>
            <person name="Stinson J."/>
            <person name="Vagts A."/>
            <person name="Vandlen R.L."/>
            <person name="Watanabe C."/>
            <person name="Wieand D."/>
            <person name="Woods K."/>
            <person name="Xie M.-H."/>
            <person name="Yansura D.G."/>
            <person name="Yi S."/>
            <person name="Yu G."/>
            <person name="Yuan J."/>
            <person name="Zhang M."/>
            <person name="Zhang Z."/>
            <person name="Goddard A.D."/>
            <person name="Wood W.I."/>
            <person name="Godowski P.J."/>
            <person name="Gray A.M."/>
        </authorList>
    </citation>
    <scope>NUCLEOTIDE SEQUENCE [LARGE SCALE MRNA] OF 2247-2573 (ISOFORM 2)</scope>
</reference>
<reference key="3">
    <citation type="journal article" date="2004" name="Genomics">
        <title>Polycystin-1L2 is a novel G-protein-binding protein.</title>
        <authorList>
            <person name="Yuasa T."/>
            <person name="Takakura A."/>
            <person name="Denker B.M."/>
            <person name="Venugopal B."/>
            <person name="Zhou J."/>
        </authorList>
    </citation>
    <scope>FUNCTION</scope>
    <scope>INTERACTION WITH GNA12; GNAS; GNAI1 AND GNAI2</scope>
</reference>
<reference key="4">
    <citation type="journal article" date="2013" name="Nature">
        <title>Direct recording and molecular identification of the calcium channel of primary cilia.</title>
        <authorList>
            <person name="DeCaen P.G."/>
            <person name="Delling M."/>
            <person name="Vien T.N."/>
            <person name="Clapham D.E."/>
        </authorList>
    </citation>
    <scope>FUNCTION</scope>
    <scope>INTERACTION WITH PKD2L1</scope>
    <scope>SUBCELLULAR LOCATION</scope>
</reference>
<reference key="5">
    <citation type="journal article" date="2016" name="Am. J. Hum. Genet.">
        <title>Bi-allelic mutations in PKD1L1 are associated with laterality defects in humans.</title>
        <authorList>
            <person name="Vetrini F."/>
            <person name="D'Alessandro L.C."/>
            <person name="Akdemir Z.C."/>
            <person name="Braxton A."/>
            <person name="Azamian M.S."/>
            <person name="Eldomery M.K."/>
            <person name="Miller K."/>
            <person name="Kois C."/>
            <person name="Sack V."/>
            <person name="Shur N."/>
            <person name="Rijhsinghani A."/>
            <person name="Chandarana J."/>
            <person name="Ding Y."/>
            <person name="Holtzman J."/>
            <person name="Jhangiani S.N."/>
            <person name="Muzny D.M."/>
            <person name="Gibbs R.A."/>
            <person name="Eng C.M."/>
            <person name="Hanchard N.A."/>
            <person name="Harel T."/>
            <person name="Rosenfeld J.A."/>
            <person name="Belmont J.W."/>
            <person name="Lupski J.R."/>
            <person name="Yang Y."/>
        </authorList>
    </citation>
    <scope>INVOLVEMENT IN HTX8</scope>
    <scope>VARIANT HTX8 SER-1691</scope>
</reference>
<reference key="6">
    <citation type="journal article" date="2010" name="Am. J. Hum. Genet.">
        <title>BMPER mutation in diaphanospondylodysostosis identified by ancestral autozygosity mapping and targeted high-throughput sequencing.</title>
        <authorList>
            <person name="Funari V.A."/>
            <person name="Krakow D."/>
            <person name="Nevarez L."/>
            <person name="Chen Z."/>
            <person name="Funari T.L."/>
            <person name="Vatanavicharn N."/>
            <person name="Wilcox W.R."/>
            <person name="Rimoin D.L."/>
            <person name="Nelson S.F."/>
            <person name="Cohn D.H."/>
        </authorList>
    </citation>
    <scope>VARIANT ILE-906</scope>
</reference>
<reference key="7">
    <citation type="journal article" date="2024" name="Cells">
        <title>PKD1L1 is involved in congenital chylothorax.</title>
        <authorList>
            <person name="Whitchurch J.B."/>
            <person name="Schneider S."/>
            <person name="Hilger A.C."/>
            <person name="Koellges R."/>
            <person name="Stegmann J.D."/>
            <person name="Waffenschmidt L."/>
            <person name="Dyer L."/>
            <person name="Thiele H."/>
            <person name="Dhabhai B."/>
            <person name="Dakal T.C."/>
            <person name="Mueller A."/>
            <person name="Norris D.P."/>
            <person name="Reutter H.M."/>
        </authorList>
    </citation>
    <scope>VARIANTS ARG-515; GLU-1282 AND HIS-2183</scope>
    <scope>CHARACTERIZATION OF VARIANTS ARG-515; GLU-1282 AND HIS-2183</scope>
    <scope>SUBCELLULAR LOCATION</scope>
    <scope>INVOLVEMENT IN CONGENITAL CHYLOTHORAX</scope>
</reference>
<organism>
    <name type="scientific">Homo sapiens</name>
    <name type="common">Human</name>
    <dbReference type="NCBI Taxonomy" id="9606"/>
    <lineage>
        <taxon>Eukaryota</taxon>
        <taxon>Metazoa</taxon>
        <taxon>Chordata</taxon>
        <taxon>Craniata</taxon>
        <taxon>Vertebrata</taxon>
        <taxon>Euteleostomi</taxon>
        <taxon>Mammalia</taxon>
        <taxon>Eutheria</taxon>
        <taxon>Euarchontoglires</taxon>
        <taxon>Primates</taxon>
        <taxon>Haplorrhini</taxon>
        <taxon>Catarrhini</taxon>
        <taxon>Hominidae</taxon>
        <taxon>Homo</taxon>
    </lineage>
</organism>
<dbReference type="EMBL" id="AB061683">
    <property type="protein sequence ID" value="BAB85807.1"/>
    <property type="molecule type" value="mRNA"/>
</dbReference>
<dbReference type="EMBL" id="AY358757">
    <property type="protein sequence ID" value="AAQ89117.1"/>
    <property type="status" value="ALT_INIT"/>
    <property type="molecule type" value="mRNA"/>
</dbReference>
<dbReference type="CCDS" id="CCDS34633.1">
    <molecule id="Q8TDX9-1"/>
</dbReference>
<dbReference type="RefSeq" id="NP_612152.1">
    <molecule id="Q8TDX9-1"/>
    <property type="nucleotide sequence ID" value="NM_138295.5"/>
</dbReference>
<dbReference type="BioGRID" id="127967">
    <property type="interactions" value="7"/>
</dbReference>
<dbReference type="FunCoup" id="Q8TDX9">
    <property type="interactions" value="17"/>
</dbReference>
<dbReference type="IntAct" id="Q8TDX9">
    <property type="interactions" value="1"/>
</dbReference>
<dbReference type="STRING" id="9606.ENSP00000289672"/>
<dbReference type="TCDB" id="1.A.5.1.3">
    <property type="family name" value="the polycystin cation channel (pcc) family"/>
</dbReference>
<dbReference type="GlyCosmos" id="Q8TDX9">
    <property type="glycosylation" value="20 sites, No reported glycans"/>
</dbReference>
<dbReference type="GlyGen" id="Q8TDX9">
    <property type="glycosylation" value="22 sites"/>
</dbReference>
<dbReference type="iPTMnet" id="Q8TDX9"/>
<dbReference type="PhosphoSitePlus" id="Q8TDX9"/>
<dbReference type="BioMuta" id="PKD1L1"/>
<dbReference type="DMDM" id="23821932"/>
<dbReference type="MassIVE" id="Q8TDX9"/>
<dbReference type="PaxDb" id="9606-ENSP00000289672"/>
<dbReference type="PeptideAtlas" id="Q8TDX9"/>
<dbReference type="ProteomicsDB" id="74366">
    <molecule id="Q8TDX9-1"/>
</dbReference>
<dbReference type="ProteomicsDB" id="74367">
    <molecule id="Q8TDX9-2"/>
</dbReference>
<dbReference type="Antibodypedia" id="13627">
    <property type="antibodies" value="60 antibodies from 12 providers"/>
</dbReference>
<dbReference type="DNASU" id="168507"/>
<dbReference type="Ensembl" id="ENST00000289672.7">
    <molecule id="Q8TDX9-1"/>
    <property type="protein sequence ID" value="ENSP00000289672.2"/>
    <property type="gene ID" value="ENSG00000158683.10"/>
</dbReference>
<dbReference type="GeneID" id="168507"/>
<dbReference type="KEGG" id="hsa:168507"/>
<dbReference type="MANE-Select" id="ENST00000289672.7">
    <property type="protein sequence ID" value="ENSP00000289672.2"/>
    <property type="RefSeq nucleotide sequence ID" value="NM_138295.5"/>
    <property type="RefSeq protein sequence ID" value="NP_612152.1"/>
</dbReference>
<dbReference type="UCSC" id="uc003tny.3">
    <molecule id="Q8TDX9-1"/>
    <property type="organism name" value="human"/>
</dbReference>
<dbReference type="AGR" id="HGNC:18053"/>
<dbReference type="CTD" id="168507"/>
<dbReference type="DisGeNET" id="168507"/>
<dbReference type="GeneCards" id="PKD1L1"/>
<dbReference type="HGNC" id="HGNC:18053">
    <property type="gene designation" value="PKD1L1"/>
</dbReference>
<dbReference type="HPA" id="ENSG00000158683">
    <property type="expression patterns" value="Low tissue specificity"/>
</dbReference>
<dbReference type="MalaCards" id="PKD1L1"/>
<dbReference type="MIM" id="609721">
    <property type="type" value="gene"/>
</dbReference>
<dbReference type="MIM" id="617205">
    <property type="type" value="phenotype"/>
</dbReference>
<dbReference type="neXtProt" id="NX_Q8TDX9"/>
<dbReference type="OpenTargets" id="ENSG00000158683"/>
<dbReference type="Orphanet" id="157769">
    <property type="disease" value="Situs ambiguus"/>
</dbReference>
<dbReference type="Orphanet" id="101063">
    <property type="disease" value="Situs inversus totalis"/>
</dbReference>
<dbReference type="PharmGKB" id="PA38282"/>
<dbReference type="VEuPathDB" id="HostDB:ENSG00000158683"/>
<dbReference type="eggNOG" id="KOG3599">
    <property type="taxonomic scope" value="Eukaryota"/>
</dbReference>
<dbReference type="GeneTree" id="ENSGT00940000162104"/>
<dbReference type="HOGENOM" id="CLU_000971_0_0_1"/>
<dbReference type="InParanoid" id="Q8TDX9"/>
<dbReference type="OMA" id="QQGAWTH"/>
<dbReference type="OrthoDB" id="10044145at2759"/>
<dbReference type="PAN-GO" id="Q8TDX9">
    <property type="GO annotations" value="3 GO annotations based on evolutionary models"/>
</dbReference>
<dbReference type="PhylomeDB" id="Q8TDX9"/>
<dbReference type="TreeFam" id="TF316484"/>
<dbReference type="PathwayCommons" id="Q8TDX9"/>
<dbReference type="SignaLink" id="Q8TDX9"/>
<dbReference type="BioGRID-ORCS" id="168507">
    <property type="hits" value="14 hits in 1140 CRISPR screens"/>
</dbReference>
<dbReference type="ChiTaRS" id="PKD1L1">
    <property type="organism name" value="human"/>
</dbReference>
<dbReference type="GenomeRNAi" id="168507"/>
<dbReference type="Pharos" id="Q8TDX9">
    <property type="development level" value="Tbio"/>
</dbReference>
<dbReference type="PRO" id="PR:Q8TDX9"/>
<dbReference type="Proteomes" id="UP000005640">
    <property type="component" value="Chromosome 7"/>
</dbReference>
<dbReference type="RNAct" id="Q8TDX9">
    <property type="molecule type" value="protein"/>
</dbReference>
<dbReference type="Bgee" id="ENSG00000158683">
    <property type="expression patterns" value="Expressed in male germ line stem cell (sensu Vertebrata) in testis and 89 other cell types or tissues"/>
</dbReference>
<dbReference type="ExpressionAtlas" id="Q8TDX9">
    <property type="expression patterns" value="baseline and differential"/>
</dbReference>
<dbReference type="GO" id="GO:0034704">
    <property type="term" value="C:calcium channel complex"/>
    <property type="evidence" value="ECO:0000314"/>
    <property type="project" value="UniProtKB"/>
</dbReference>
<dbReference type="GO" id="GO:0060170">
    <property type="term" value="C:ciliary membrane"/>
    <property type="evidence" value="ECO:0000314"/>
    <property type="project" value="UniProtKB"/>
</dbReference>
<dbReference type="GO" id="GO:0005929">
    <property type="term" value="C:cilium"/>
    <property type="evidence" value="ECO:0000250"/>
    <property type="project" value="BHF-UCL"/>
</dbReference>
<dbReference type="GO" id="GO:0016020">
    <property type="term" value="C:membrane"/>
    <property type="evidence" value="ECO:0000318"/>
    <property type="project" value="GO_Central"/>
</dbReference>
<dbReference type="GO" id="GO:0097730">
    <property type="term" value="C:non-motile cilium"/>
    <property type="evidence" value="ECO:0000314"/>
    <property type="project" value="UniProtKB"/>
</dbReference>
<dbReference type="GO" id="GO:0005262">
    <property type="term" value="F:calcium channel activity"/>
    <property type="evidence" value="ECO:0000318"/>
    <property type="project" value="GO_Central"/>
</dbReference>
<dbReference type="GO" id="GO:0098609">
    <property type="term" value="P:cell-cell adhesion"/>
    <property type="evidence" value="ECO:0000303"/>
    <property type="project" value="UniProtKB"/>
</dbReference>
<dbReference type="GO" id="GO:0050982">
    <property type="term" value="P:detection of mechanical stimulus"/>
    <property type="evidence" value="ECO:0000318"/>
    <property type="project" value="GO_Central"/>
</dbReference>
<dbReference type="GO" id="GO:0003127">
    <property type="term" value="P:detection of nodal flow"/>
    <property type="evidence" value="ECO:0000250"/>
    <property type="project" value="BHF-UCL"/>
</dbReference>
<dbReference type="GO" id="GO:0070986">
    <property type="term" value="P:left/right axis specification"/>
    <property type="evidence" value="ECO:0000250"/>
    <property type="project" value="BHF-UCL"/>
</dbReference>
<dbReference type="CDD" id="cd00146">
    <property type="entry name" value="PKD"/>
    <property type="match status" value="1"/>
</dbReference>
<dbReference type="CDD" id="cd01752">
    <property type="entry name" value="PLAT_polycystin"/>
    <property type="match status" value="1"/>
</dbReference>
<dbReference type="FunFam" id="2.60.60.20:FF:000017">
    <property type="entry name" value="Polycystin 1 like 1, transient receptor potential channel interacting"/>
    <property type="match status" value="1"/>
</dbReference>
<dbReference type="FunFam" id="2.60.40.10:FF:000825">
    <property type="entry name" value="Polycystin 1, transient receptor potential channel interacting"/>
    <property type="match status" value="1"/>
</dbReference>
<dbReference type="Gene3D" id="2.60.40.10">
    <property type="entry name" value="Immunoglobulins"/>
    <property type="match status" value="1"/>
</dbReference>
<dbReference type="Gene3D" id="2.60.60.20">
    <property type="entry name" value="PLAT/LH2 domain"/>
    <property type="match status" value="1"/>
</dbReference>
<dbReference type="InterPro" id="IPR057244">
    <property type="entry name" value="GAIN_B"/>
</dbReference>
<dbReference type="InterPro" id="IPR013783">
    <property type="entry name" value="Ig-like_fold"/>
</dbReference>
<dbReference type="InterPro" id="IPR022409">
    <property type="entry name" value="PKD/Chitinase_dom"/>
</dbReference>
<dbReference type="InterPro" id="IPR002859">
    <property type="entry name" value="PKD/REJ-like"/>
</dbReference>
<dbReference type="InterPro" id="IPR013122">
    <property type="entry name" value="PKD1_2_channel"/>
</dbReference>
<dbReference type="InterPro" id="IPR000601">
    <property type="entry name" value="PKD_dom"/>
</dbReference>
<dbReference type="InterPro" id="IPR035986">
    <property type="entry name" value="PKD_dom_sf"/>
</dbReference>
<dbReference type="InterPro" id="IPR001024">
    <property type="entry name" value="PLAT/LH2_dom"/>
</dbReference>
<dbReference type="InterPro" id="IPR036392">
    <property type="entry name" value="PLAT/LH2_dom_sf"/>
</dbReference>
<dbReference type="InterPro" id="IPR042060">
    <property type="entry name" value="PLAT_polycystin1"/>
</dbReference>
<dbReference type="InterPro" id="IPR046791">
    <property type="entry name" value="Polycystin_dom"/>
</dbReference>
<dbReference type="InterPro" id="IPR014010">
    <property type="entry name" value="REJ_dom"/>
</dbReference>
<dbReference type="PANTHER" id="PTHR46730:SF4">
    <property type="entry name" value="POLYCYSTIC KIDNEY DISEASE PROTEIN 1-LIKE 1"/>
    <property type="match status" value="1"/>
</dbReference>
<dbReference type="PANTHER" id="PTHR46730">
    <property type="entry name" value="POLYCYSTIN-1"/>
    <property type="match status" value="1"/>
</dbReference>
<dbReference type="Pfam" id="PF00801">
    <property type="entry name" value="PKD"/>
    <property type="match status" value="1"/>
</dbReference>
<dbReference type="Pfam" id="PF08016">
    <property type="entry name" value="PKD_channel"/>
    <property type="match status" value="1"/>
</dbReference>
<dbReference type="Pfam" id="PF01477">
    <property type="entry name" value="PLAT"/>
    <property type="match status" value="1"/>
</dbReference>
<dbReference type="Pfam" id="PF20519">
    <property type="entry name" value="Polycystin_dom"/>
    <property type="match status" value="1"/>
</dbReference>
<dbReference type="Pfam" id="PF02010">
    <property type="entry name" value="REJ"/>
    <property type="match status" value="2"/>
</dbReference>
<dbReference type="SMART" id="SM00308">
    <property type="entry name" value="LH2"/>
    <property type="match status" value="1"/>
</dbReference>
<dbReference type="SMART" id="SM00089">
    <property type="entry name" value="PKD"/>
    <property type="match status" value="2"/>
</dbReference>
<dbReference type="SUPFAM" id="SSF49723">
    <property type="entry name" value="Lipase/lipooxygenase domain (PLAT/LH2 domain)"/>
    <property type="match status" value="1"/>
</dbReference>
<dbReference type="SUPFAM" id="SSF49299">
    <property type="entry name" value="PKD domain"/>
    <property type="match status" value="1"/>
</dbReference>
<dbReference type="PROSITE" id="PS50221">
    <property type="entry name" value="GAIN_B"/>
    <property type="match status" value="1"/>
</dbReference>
<dbReference type="PROSITE" id="PS50093">
    <property type="entry name" value="PKD"/>
    <property type="match status" value="1"/>
</dbReference>
<dbReference type="PROSITE" id="PS50095">
    <property type="entry name" value="PLAT"/>
    <property type="match status" value="1"/>
</dbReference>
<dbReference type="PROSITE" id="PS51111">
    <property type="entry name" value="REJ"/>
    <property type="match status" value="1"/>
</dbReference>
<gene>
    <name evidence="16" type="primary">PKD1L1</name>
    <name type="synonym">PC1L1</name>
    <name type="ORF">UNQ5785/PRO19563</name>
</gene>
<feature type="chain" id="PRO_0000164358" description="Polycystin-1-like protein 1">
    <location>
        <begin position="1"/>
        <end position="2849"/>
    </location>
</feature>
<feature type="topological domain" description="Extracellular" evidence="2">
    <location>
        <begin position="1"/>
        <end position="1748"/>
    </location>
</feature>
<feature type="transmembrane region" description="Helical" evidence="2">
    <location>
        <begin position="1749"/>
        <end position="1769"/>
    </location>
</feature>
<feature type="topological domain" description="Cytoplasmic" evidence="2">
    <location>
        <begin position="1770"/>
        <end position="1956"/>
    </location>
</feature>
<feature type="transmembrane region" description="Helical" evidence="2">
    <location>
        <begin position="1957"/>
        <end position="1977"/>
    </location>
</feature>
<feature type="topological domain" description="Extracellular" evidence="2">
    <location>
        <begin position="1978"/>
        <end position="1992"/>
    </location>
</feature>
<feature type="transmembrane region" description="Helical" evidence="2">
    <location>
        <begin position="1993"/>
        <end position="2013"/>
    </location>
</feature>
<feature type="topological domain" description="Cytoplasmic" evidence="2">
    <location>
        <begin position="2014"/>
        <end position="2135"/>
    </location>
</feature>
<feature type="transmembrane region" description="Helical" evidence="2">
    <location>
        <begin position="2136"/>
        <end position="2156"/>
    </location>
</feature>
<feature type="topological domain" description="Extracellular" evidence="2">
    <location>
        <begin position="2157"/>
        <end position="2174"/>
    </location>
</feature>
<feature type="transmembrane region" description="Helical" evidence="2">
    <location>
        <begin position="2175"/>
        <end position="2195"/>
    </location>
</feature>
<feature type="topological domain" description="Cytoplasmic" evidence="2">
    <location>
        <begin position="2196"/>
        <end position="2281"/>
    </location>
</feature>
<feature type="transmembrane region" description="Helical" evidence="2">
    <location>
        <begin position="2282"/>
        <end position="2302"/>
    </location>
</feature>
<feature type="topological domain" description="Extracellular" evidence="2">
    <location>
        <begin position="2303"/>
        <end position="2522"/>
    </location>
</feature>
<feature type="transmembrane region" description="Helical" evidence="2">
    <location>
        <begin position="2523"/>
        <end position="2543"/>
    </location>
</feature>
<feature type="topological domain" description="Cytoplasmic" evidence="2">
    <location>
        <begin position="2544"/>
        <end position="2562"/>
    </location>
</feature>
<feature type="transmembrane region" description="Helical" evidence="2">
    <location>
        <begin position="2563"/>
        <end position="2583"/>
    </location>
</feature>
<feature type="topological domain" description="Extracellular" evidence="2">
    <location>
        <begin position="2584"/>
        <end position="2616"/>
    </location>
</feature>
<feature type="transmembrane region" description="Helical" evidence="2">
    <location>
        <begin position="2617"/>
        <end position="2637"/>
    </location>
</feature>
<feature type="topological domain" description="Cytoplasmic" evidence="2">
    <location>
        <begin position="2638"/>
        <end position="2646"/>
    </location>
</feature>
<feature type="transmembrane region" description="Helical" evidence="2">
    <location>
        <begin position="2647"/>
        <end position="2667"/>
    </location>
</feature>
<feature type="topological domain" description="Extracellular" evidence="2">
    <location>
        <begin position="2668"/>
        <end position="2711"/>
    </location>
</feature>
<feature type="transmembrane region" description="Helical" evidence="2">
    <location>
        <begin position="2712"/>
        <end position="2732"/>
    </location>
</feature>
<feature type="topological domain" description="Cytoplasmic" evidence="2">
    <location>
        <begin position="2733"/>
        <end position="2849"/>
    </location>
</feature>
<feature type="domain" description="PKD 1" evidence="4">
    <location>
        <begin position="508"/>
        <end position="590"/>
    </location>
</feature>
<feature type="domain" description="PKD 2" evidence="4">
    <location>
        <begin position="592"/>
        <end position="673"/>
    </location>
</feature>
<feature type="domain" description="REJ" evidence="6">
    <location>
        <begin position="674"/>
        <end position="1571"/>
    </location>
</feature>
<feature type="domain" description="GAIN-B" evidence="3">
    <location>
        <begin position="1587"/>
        <end position="1735"/>
    </location>
</feature>
<feature type="domain" description="PLAT" evidence="5">
    <location>
        <begin position="1796"/>
        <end position="1913"/>
    </location>
</feature>
<feature type="region of interest" description="Disordered" evidence="7">
    <location>
        <begin position="970"/>
        <end position="1068"/>
    </location>
</feature>
<feature type="region of interest" description="Disordered" evidence="7">
    <location>
        <begin position="1081"/>
        <end position="1118"/>
    </location>
</feature>
<feature type="region of interest" description="GPS" evidence="3">
    <location>
        <begin position="1691"/>
        <end position="1735"/>
    </location>
</feature>
<feature type="region of interest" description="Disordered" evidence="7">
    <location>
        <begin position="2023"/>
        <end position="2089"/>
    </location>
</feature>
<feature type="compositionally biased region" description="Low complexity" evidence="7">
    <location>
        <begin position="970"/>
        <end position="987"/>
    </location>
</feature>
<feature type="compositionally biased region" description="Basic and acidic residues" evidence="7">
    <location>
        <begin position="1053"/>
        <end position="1068"/>
    </location>
</feature>
<feature type="glycosylation site" description="N-linked (GlcNAc...) asparagine" evidence="2">
    <location>
        <position position="8"/>
    </location>
</feature>
<feature type="glycosylation site" description="N-linked (GlcNAc...) asparagine" evidence="2">
    <location>
        <position position="295"/>
    </location>
</feature>
<feature type="glycosylation site" description="N-linked (GlcNAc...) asparagine" evidence="2">
    <location>
        <position position="338"/>
    </location>
</feature>
<feature type="glycosylation site" description="N-linked (GlcNAc...) asparagine" evidence="2">
    <location>
        <position position="376"/>
    </location>
</feature>
<feature type="glycosylation site" description="N-linked (GlcNAc...) asparagine" evidence="2">
    <location>
        <position position="447"/>
    </location>
</feature>
<feature type="glycosylation site" description="N-linked (GlcNAc...) asparagine" evidence="2">
    <location>
        <position position="482"/>
    </location>
</feature>
<feature type="glycosylation site" description="N-linked (GlcNAc...) asparagine" evidence="2">
    <location>
        <position position="514"/>
    </location>
</feature>
<feature type="glycosylation site" description="N-linked (GlcNAc...) asparagine" evidence="2">
    <location>
        <position position="605"/>
    </location>
</feature>
<feature type="glycosylation site" description="N-linked (GlcNAc...) asparagine" evidence="2">
    <location>
        <position position="657"/>
    </location>
</feature>
<feature type="glycosylation site" description="N-linked (GlcNAc...) asparagine" evidence="2">
    <location>
        <position position="751"/>
    </location>
</feature>
<feature type="glycosylation site" description="N-linked (GlcNAc...) asparagine" evidence="2">
    <location>
        <position position="875"/>
    </location>
</feature>
<feature type="glycosylation site" description="N-linked (GlcNAc...) asparagine" evidence="2">
    <location>
        <position position="926"/>
    </location>
</feature>
<feature type="glycosylation site" description="N-linked (GlcNAc...) asparagine" evidence="2">
    <location>
        <position position="937"/>
    </location>
</feature>
<feature type="glycosylation site" description="N-linked (GlcNAc...) asparagine" evidence="2">
    <location>
        <position position="1233"/>
    </location>
</feature>
<feature type="glycosylation site" description="N-linked (GlcNAc...) asparagine" evidence="2">
    <location>
        <position position="1301"/>
    </location>
</feature>
<feature type="glycosylation site" description="N-linked (GlcNAc...) asparagine" evidence="2">
    <location>
        <position position="1306"/>
    </location>
</feature>
<feature type="glycosylation site" description="N-linked (GlcNAc...) asparagine" evidence="2">
    <location>
        <position position="1572"/>
    </location>
</feature>
<feature type="glycosylation site" description="N-linked (GlcNAc...) asparagine" evidence="2">
    <location>
        <position position="1681"/>
    </location>
</feature>
<feature type="glycosylation site" description="N-linked (GlcNAc...) asparagine" evidence="2">
    <location>
        <position position="1716"/>
    </location>
</feature>
<feature type="glycosylation site" description="N-linked (GlcNAc...) asparagine" evidence="2">
    <location>
        <position position="2426"/>
    </location>
</feature>
<feature type="disulfide bond" evidence="3">
    <location>
        <begin position="1691"/>
        <end position="1717"/>
    </location>
</feature>
<feature type="splice variant" id="VSP_013215" description="In isoform 2." evidence="14">
    <original>LSVVGVSLTYY</original>
    <variation>VASLVSFSFEK</variation>
    <location>
        <begin position="2563"/>
        <end position="2573"/>
    </location>
</feature>
<feature type="splice variant" id="VSP_013216" description="In isoform 2." evidence="14">
    <location>
        <begin position="2574"/>
        <end position="2849"/>
    </location>
</feature>
<feature type="sequence variant" id="VAR_024566" description="In dbSNP:rs2686817.">
    <original>V</original>
    <variation>F</variation>
    <location>
        <position position="312"/>
    </location>
</feature>
<feature type="sequence variant" id="VAR_089222" description="Found in a patient with autosomal recessive congenital chylothorax; uncertain significance; does not affect localization to cilia." evidence="13">
    <original>G</original>
    <variation>R</variation>
    <location>
        <position position="515"/>
    </location>
</feature>
<feature type="sequence variant" id="VAR_050552" description="In dbSNP:rs17131915.">
    <original>D</original>
    <variation>N</variation>
    <location>
        <position position="812"/>
    </location>
</feature>
<feature type="sequence variant" id="VAR_050553" description="In dbSNP:rs11972142.">
    <original>T</original>
    <variation>A</variation>
    <location>
        <position position="879"/>
    </location>
</feature>
<feature type="sequence variant" id="VAR_061522" description="In dbSNP:rs56100904.">
    <original>V</original>
    <variation>I</variation>
    <location>
        <position position="894"/>
    </location>
</feature>
<feature type="sequence variant" id="VAR_065825" description="In dbSNP:rs141681038." evidence="10">
    <original>V</original>
    <variation>I</variation>
    <location>
        <position position="906"/>
    </location>
</feature>
<feature type="sequence variant" id="VAR_024567" description="In dbSNP:rs10274334.">
    <original>R</original>
    <variation>P</variation>
    <location>
        <position position="1053"/>
    </location>
</feature>
<feature type="sequence variant" id="VAR_024568" description="In dbSNP:rs1470859.">
    <original>K</original>
    <variation>E</variation>
    <location>
        <position position="1272"/>
    </location>
</feature>
<feature type="sequence variant" id="VAR_089223" description="Found in a patient with autosomal recessive congenital chylothorax; uncertain significance; does not affect localization to cilia; dbSNP:rs138130715." evidence="13">
    <original>V</original>
    <variation>E</variation>
    <location>
        <position position="1282"/>
    </location>
</feature>
<feature type="sequence variant" id="VAR_077879" description="In HTX8; dbSNP:rs886037834." evidence="12">
    <original>C</original>
    <variation>S</variation>
    <location>
        <position position="1691"/>
    </location>
</feature>
<feature type="sequence variant" id="VAR_061523" description="In dbSNP:rs17131834.">
    <original>R</original>
    <variation>H</variation>
    <location>
        <position position="2057"/>
    </location>
</feature>
<feature type="sequence variant" id="VAR_089224" description="Found in a patient with autosomal recessive congenital chylothorax; uncertain significance; does not affect localization to cilia." evidence="13">
    <original>Q</original>
    <variation>H</variation>
    <location>
        <position position="2183"/>
    </location>
</feature>
<feature type="sequence variant" id="VAR_021944" description="In dbSNP:rs2290386.">
    <original>E</original>
    <variation>K</variation>
    <location>
        <position position="2410"/>
    </location>
</feature>
<feature type="sequence variant" id="VAR_061524" description="In dbSNP:rs59848490.">
    <original>L</original>
    <variation>F</variation>
    <location>
        <position position="2603"/>
    </location>
</feature>
<feature type="sequence variant" id="VAR_050554" description="In dbSNP:rs13231277.">
    <original>A</original>
    <variation>T</variation>
    <location>
        <position position="2685"/>
    </location>
</feature>
<evidence type="ECO:0000250" key="1">
    <source>
        <dbReference type="UniProtKB" id="Q8R526"/>
    </source>
</evidence>
<evidence type="ECO:0000255" key="2"/>
<evidence type="ECO:0000255" key="3">
    <source>
        <dbReference type="PROSITE-ProRule" id="PRU00098"/>
    </source>
</evidence>
<evidence type="ECO:0000255" key="4">
    <source>
        <dbReference type="PROSITE-ProRule" id="PRU00151"/>
    </source>
</evidence>
<evidence type="ECO:0000255" key="5">
    <source>
        <dbReference type="PROSITE-ProRule" id="PRU00152"/>
    </source>
</evidence>
<evidence type="ECO:0000255" key="6">
    <source>
        <dbReference type="PROSITE-ProRule" id="PRU00511"/>
    </source>
</evidence>
<evidence type="ECO:0000256" key="7">
    <source>
        <dbReference type="SAM" id="MobiDB-lite"/>
    </source>
</evidence>
<evidence type="ECO:0000269" key="8">
    <source>
    </source>
</evidence>
<evidence type="ECO:0000269" key="9">
    <source>
    </source>
</evidence>
<evidence type="ECO:0000269" key="10">
    <source>
    </source>
</evidence>
<evidence type="ECO:0000269" key="11">
    <source>
    </source>
</evidence>
<evidence type="ECO:0000269" key="12">
    <source>
    </source>
</evidence>
<evidence type="ECO:0000269" key="13">
    <source>
    </source>
</evidence>
<evidence type="ECO:0000303" key="14">
    <source>
    </source>
</evidence>
<evidence type="ECO:0000305" key="15"/>
<evidence type="ECO:0000312" key="16">
    <source>
        <dbReference type="HGNC" id="HGNC:18053"/>
    </source>
</evidence>